<comment type="function">
    <text evidence="1">Presumably involved in the processing and regular turnover of intracellular proteins. Catalyzes the removal of unsubstituted N-terminal amino acids from various peptides.</text>
</comment>
<comment type="catalytic activity">
    <reaction evidence="1">
        <text>Release of an N-terminal amino acid, Xaa-|-Yaa-, in which Xaa is preferably Leu, but may be other amino acids including Pro although not Arg or Lys, and Yaa may be Pro. Amino acid amides and methyl esters are also readily hydrolyzed, but rates on arylamides are exceedingly low.</text>
        <dbReference type="EC" id="3.4.11.1"/>
    </reaction>
</comment>
<comment type="catalytic activity">
    <reaction evidence="1">
        <text>Release of an N-terminal amino acid, preferentially leucine, but not glutamic or aspartic acids.</text>
        <dbReference type="EC" id="3.4.11.10"/>
    </reaction>
</comment>
<comment type="cofactor">
    <cofactor evidence="1">
        <name>Mn(2+)</name>
        <dbReference type="ChEBI" id="CHEBI:29035"/>
    </cofactor>
    <text evidence="1">Binds 2 manganese ions per subunit.</text>
</comment>
<comment type="subcellular location">
    <subcellularLocation>
        <location evidence="1">Cytoplasm</location>
    </subcellularLocation>
</comment>
<comment type="similarity">
    <text evidence="1">Belongs to the peptidase M17 family.</text>
</comment>
<accession>A7ZVE0</accession>
<protein>
    <recommendedName>
        <fullName evidence="1">Probable cytosol aminopeptidase</fullName>
        <ecNumber evidence="1">3.4.11.1</ecNumber>
    </recommendedName>
    <alternativeName>
        <fullName evidence="1">Leucine aminopeptidase</fullName>
        <shortName evidence="1">LAP</shortName>
        <ecNumber evidence="1">3.4.11.10</ecNumber>
    </alternativeName>
    <alternativeName>
        <fullName evidence="1">Leucyl aminopeptidase</fullName>
    </alternativeName>
</protein>
<keyword id="KW-0031">Aminopeptidase</keyword>
<keyword id="KW-0963">Cytoplasm</keyword>
<keyword id="KW-0378">Hydrolase</keyword>
<keyword id="KW-0464">Manganese</keyword>
<keyword id="KW-0479">Metal-binding</keyword>
<keyword id="KW-0645">Protease</keyword>
<keyword id="KW-1185">Reference proteome</keyword>
<feature type="chain" id="PRO_1000058386" description="Probable cytosol aminopeptidase">
    <location>
        <begin position="1"/>
        <end position="503"/>
    </location>
</feature>
<feature type="active site" evidence="1">
    <location>
        <position position="282"/>
    </location>
</feature>
<feature type="active site" evidence="1">
    <location>
        <position position="356"/>
    </location>
</feature>
<feature type="binding site" evidence="1">
    <location>
        <position position="270"/>
    </location>
    <ligand>
        <name>Mn(2+)</name>
        <dbReference type="ChEBI" id="CHEBI:29035"/>
        <label>2</label>
    </ligand>
</feature>
<feature type="binding site" evidence="1">
    <location>
        <position position="275"/>
    </location>
    <ligand>
        <name>Mn(2+)</name>
        <dbReference type="ChEBI" id="CHEBI:29035"/>
        <label>1</label>
    </ligand>
</feature>
<feature type="binding site" evidence="1">
    <location>
        <position position="275"/>
    </location>
    <ligand>
        <name>Mn(2+)</name>
        <dbReference type="ChEBI" id="CHEBI:29035"/>
        <label>2</label>
    </ligand>
</feature>
<feature type="binding site" evidence="1">
    <location>
        <position position="293"/>
    </location>
    <ligand>
        <name>Mn(2+)</name>
        <dbReference type="ChEBI" id="CHEBI:29035"/>
        <label>2</label>
    </ligand>
</feature>
<feature type="binding site" evidence="1">
    <location>
        <position position="352"/>
    </location>
    <ligand>
        <name>Mn(2+)</name>
        <dbReference type="ChEBI" id="CHEBI:29035"/>
        <label>1</label>
    </ligand>
</feature>
<feature type="binding site" evidence="1">
    <location>
        <position position="354"/>
    </location>
    <ligand>
        <name>Mn(2+)</name>
        <dbReference type="ChEBI" id="CHEBI:29035"/>
        <label>1</label>
    </ligand>
</feature>
<feature type="binding site" evidence="1">
    <location>
        <position position="354"/>
    </location>
    <ligand>
        <name>Mn(2+)</name>
        <dbReference type="ChEBI" id="CHEBI:29035"/>
        <label>2</label>
    </ligand>
</feature>
<dbReference type="EC" id="3.4.11.1" evidence="1"/>
<dbReference type="EC" id="3.4.11.10" evidence="1"/>
<dbReference type="EMBL" id="CP000800">
    <property type="protein sequence ID" value="ABV19937.1"/>
    <property type="molecule type" value="Genomic_DNA"/>
</dbReference>
<dbReference type="RefSeq" id="WP_000397144.1">
    <property type="nucleotide sequence ID" value="NC_009801.1"/>
</dbReference>
<dbReference type="SMR" id="A7ZVE0"/>
<dbReference type="MEROPS" id="M17.003"/>
<dbReference type="GeneID" id="93777558"/>
<dbReference type="KEGG" id="ecw:EcE24377A_4832"/>
<dbReference type="HOGENOM" id="CLU_013734_2_2_6"/>
<dbReference type="Proteomes" id="UP000001122">
    <property type="component" value="Chromosome"/>
</dbReference>
<dbReference type="GO" id="GO:0005737">
    <property type="term" value="C:cytoplasm"/>
    <property type="evidence" value="ECO:0007669"/>
    <property type="project" value="UniProtKB-SubCell"/>
</dbReference>
<dbReference type="GO" id="GO:0030145">
    <property type="term" value="F:manganese ion binding"/>
    <property type="evidence" value="ECO:0007669"/>
    <property type="project" value="UniProtKB-UniRule"/>
</dbReference>
<dbReference type="GO" id="GO:0070006">
    <property type="term" value="F:metalloaminopeptidase activity"/>
    <property type="evidence" value="ECO:0007669"/>
    <property type="project" value="InterPro"/>
</dbReference>
<dbReference type="GO" id="GO:0006508">
    <property type="term" value="P:proteolysis"/>
    <property type="evidence" value="ECO:0007669"/>
    <property type="project" value="UniProtKB-KW"/>
</dbReference>
<dbReference type="CDD" id="cd00433">
    <property type="entry name" value="Peptidase_M17"/>
    <property type="match status" value="1"/>
</dbReference>
<dbReference type="FunFam" id="3.40.220.10:FF:000001">
    <property type="entry name" value="Probable cytosol aminopeptidase"/>
    <property type="match status" value="1"/>
</dbReference>
<dbReference type="FunFam" id="3.40.630.10:FF:000004">
    <property type="entry name" value="Probable cytosol aminopeptidase"/>
    <property type="match status" value="1"/>
</dbReference>
<dbReference type="Gene3D" id="3.40.220.10">
    <property type="entry name" value="Leucine Aminopeptidase, subunit E, domain 1"/>
    <property type="match status" value="1"/>
</dbReference>
<dbReference type="Gene3D" id="3.40.630.10">
    <property type="entry name" value="Zn peptidases"/>
    <property type="match status" value="1"/>
</dbReference>
<dbReference type="HAMAP" id="MF_00181">
    <property type="entry name" value="Cytosol_peptidase_M17"/>
    <property type="match status" value="1"/>
</dbReference>
<dbReference type="InterPro" id="IPR011356">
    <property type="entry name" value="Leucine_aapep/pepB"/>
</dbReference>
<dbReference type="InterPro" id="IPR043472">
    <property type="entry name" value="Macro_dom-like"/>
</dbReference>
<dbReference type="InterPro" id="IPR000819">
    <property type="entry name" value="Peptidase_M17_C"/>
</dbReference>
<dbReference type="InterPro" id="IPR023042">
    <property type="entry name" value="Peptidase_M17_leu_NH2_pept"/>
</dbReference>
<dbReference type="InterPro" id="IPR008283">
    <property type="entry name" value="Peptidase_M17_N"/>
</dbReference>
<dbReference type="NCBIfam" id="NF002072">
    <property type="entry name" value="PRK00913.1-1"/>
    <property type="match status" value="1"/>
</dbReference>
<dbReference type="NCBIfam" id="NF002073">
    <property type="entry name" value="PRK00913.1-2"/>
    <property type="match status" value="1"/>
</dbReference>
<dbReference type="NCBIfam" id="NF002074">
    <property type="entry name" value="PRK00913.1-4"/>
    <property type="match status" value="1"/>
</dbReference>
<dbReference type="PANTHER" id="PTHR11963:SF23">
    <property type="entry name" value="CYTOSOL AMINOPEPTIDASE"/>
    <property type="match status" value="1"/>
</dbReference>
<dbReference type="PANTHER" id="PTHR11963">
    <property type="entry name" value="LEUCINE AMINOPEPTIDASE-RELATED"/>
    <property type="match status" value="1"/>
</dbReference>
<dbReference type="Pfam" id="PF00883">
    <property type="entry name" value="Peptidase_M17"/>
    <property type="match status" value="1"/>
</dbReference>
<dbReference type="Pfam" id="PF02789">
    <property type="entry name" value="Peptidase_M17_N"/>
    <property type="match status" value="1"/>
</dbReference>
<dbReference type="PRINTS" id="PR00481">
    <property type="entry name" value="LAMNOPPTDASE"/>
</dbReference>
<dbReference type="SUPFAM" id="SSF52949">
    <property type="entry name" value="Macro domain-like"/>
    <property type="match status" value="1"/>
</dbReference>
<dbReference type="SUPFAM" id="SSF53187">
    <property type="entry name" value="Zn-dependent exopeptidases"/>
    <property type="match status" value="1"/>
</dbReference>
<dbReference type="PROSITE" id="PS00631">
    <property type="entry name" value="CYTOSOL_AP"/>
    <property type="match status" value="1"/>
</dbReference>
<name>AMPA_ECO24</name>
<evidence type="ECO:0000255" key="1">
    <source>
        <dbReference type="HAMAP-Rule" id="MF_00181"/>
    </source>
</evidence>
<proteinExistence type="inferred from homology"/>
<sequence length="503" mass="54880">MEFSVKSGSPEKQRSACIVVGVFEPRRLSPIAEQLDKISDGYISALLRRGELEGKPGQTLLLHHVPNVLSERILLIGCGKERELDERQYKQVIQKTINTLNDTGSMEAVCFLTELHVKGRNNYWKVRQAVETAKETLYSFDQLKTNKSEPRRPLRKMVFNVPTRRELTSGERAIQHGLAIAAGIKAAKDLGNMPPNICNAAYLASQARQLADSYSKNVITRVIGEQQMKELGMHSYLAVGQGSQNESLMSVIEYKGNASEDARPIVLVGKGLTFDSGGISIKPSEGMDEMKYDMCGAAAVYGVMRMVAELQLPINVIGVLAGCENMPGGRAYRPGDVLTTMSGQTVEVLNTDAEGRLVLCDVLTYVERFEPEAVIDVATLTGACVIALGHHITGLMANHNPLAHELIAASEQSGDRAWRLPLGDEYQEQLESNFADMANIGGRPGGAITAGCFLSRFTRKYNWAHLDIAGTAWRSGKAKGATGRPVALLAQFLLNRAGFNGEE</sequence>
<reference key="1">
    <citation type="journal article" date="2008" name="J. Bacteriol.">
        <title>The pangenome structure of Escherichia coli: comparative genomic analysis of E. coli commensal and pathogenic isolates.</title>
        <authorList>
            <person name="Rasko D.A."/>
            <person name="Rosovitz M.J."/>
            <person name="Myers G.S.A."/>
            <person name="Mongodin E.F."/>
            <person name="Fricke W.F."/>
            <person name="Gajer P."/>
            <person name="Crabtree J."/>
            <person name="Sebaihia M."/>
            <person name="Thomson N.R."/>
            <person name="Chaudhuri R."/>
            <person name="Henderson I.R."/>
            <person name="Sperandio V."/>
            <person name="Ravel J."/>
        </authorList>
    </citation>
    <scope>NUCLEOTIDE SEQUENCE [LARGE SCALE GENOMIC DNA]</scope>
    <source>
        <strain>E24377A / ETEC</strain>
    </source>
</reference>
<gene>
    <name evidence="1" type="primary">pepA</name>
    <name type="ordered locus">EcE24377A_4832</name>
</gene>
<organism>
    <name type="scientific">Escherichia coli O139:H28 (strain E24377A / ETEC)</name>
    <dbReference type="NCBI Taxonomy" id="331111"/>
    <lineage>
        <taxon>Bacteria</taxon>
        <taxon>Pseudomonadati</taxon>
        <taxon>Pseudomonadota</taxon>
        <taxon>Gammaproteobacteria</taxon>
        <taxon>Enterobacterales</taxon>
        <taxon>Enterobacteriaceae</taxon>
        <taxon>Escherichia</taxon>
    </lineage>
</organism>